<feature type="initiator methionine" description="Removed" evidence="7">
    <location>
        <position position="1"/>
    </location>
</feature>
<feature type="chain" id="PRO_0000352257" description="PRA1 family protein D">
    <location>
        <begin position="2"/>
        <end position="182"/>
    </location>
</feature>
<feature type="transmembrane region" description="Helical" evidence="2">
    <location>
        <begin position="68"/>
        <end position="88"/>
    </location>
</feature>
<feature type="transmembrane region" description="Helical" evidence="2">
    <location>
        <begin position="107"/>
        <end position="127"/>
    </location>
</feature>
<feature type="transmembrane region" description="Helical" evidence="2">
    <location>
        <begin position="129"/>
        <end position="149"/>
    </location>
</feature>
<feature type="region of interest" description="Disordered" evidence="3">
    <location>
        <begin position="163"/>
        <end position="182"/>
    </location>
</feature>
<feature type="modified residue" description="N-acetylalanine" evidence="7">
    <location>
        <position position="2"/>
    </location>
</feature>
<feature type="sequence conflict" description="In Ref. 5; AAM63905." evidence="6" ref="5">
    <original>Y</original>
    <variation>N</variation>
    <location>
        <position position="179"/>
    </location>
</feature>
<dbReference type="EMBL" id="AJ249730">
    <property type="protein sequence ID" value="CAC80648.1"/>
    <property type="molecule type" value="mRNA"/>
</dbReference>
<dbReference type="EMBL" id="AC000104">
    <property type="protein sequence ID" value="AAB70450.1"/>
    <property type="molecule type" value="Genomic_DNA"/>
</dbReference>
<dbReference type="EMBL" id="CP002684">
    <property type="protein sequence ID" value="AEE27675.1"/>
    <property type="molecule type" value="Genomic_DNA"/>
</dbReference>
<dbReference type="EMBL" id="AF370283">
    <property type="protein sequence ID" value="AAK44098.1"/>
    <property type="molecule type" value="mRNA"/>
</dbReference>
<dbReference type="EMBL" id="AY063049">
    <property type="protein sequence ID" value="AAL34223.1"/>
    <property type="molecule type" value="mRNA"/>
</dbReference>
<dbReference type="EMBL" id="AY086858">
    <property type="protein sequence ID" value="AAM63905.1"/>
    <property type="molecule type" value="mRNA"/>
</dbReference>
<dbReference type="PIR" id="A86174">
    <property type="entry name" value="A86174"/>
</dbReference>
<dbReference type="RefSeq" id="NP_563704.1">
    <property type="nucleotide sequence ID" value="NM_100307.3"/>
</dbReference>
<dbReference type="FunCoup" id="P93829">
    <property type="interactions" value="1960"/>
</dbReference>
<dbReference type="STRING" id="3702.P93829"/>
<dbReference type="iPTMnet" id="P93829"/>
<dbReference type="PaxDb" id="3702-AT1G04260.1"/>
<dbReference type="ProteomicsDB" id="234869"/>
<dbReference type="EnsemblPlants" id="AT1G04260.1">
    <property type="protein sequence ID" value="AT1G04260.1"/>
    <property type="gene ID" value="AT1G04260"/>
</dbReference>
<dbReference type="GeneID" id="839565"/>
<dbReference type="Gramene" id="AT1G04260.1">
    <property type="protein sequence ID" value="AT1G04260.1"/>
    <property type="gene ID" value="AT1G04260"/>
</dbReference>
<dbReference type="KEGG" id="ath:AT1G04260"/>
<dbReference type="Araport" id="AT1G04260"/>
<dbReference type="TAIR" id="AT1G04260">
    <property type="gene designation" value="MPI7"/>
</dbReference>
<dbReference type="eggNOG" id="KOG3142">
    <property type="taxonomic scope" value="Eukaryota"/>
</dbReference>
<dbReference type="HOGENOM" id="CLU_060198_2_1_1"/>
<dbReference type="InParanoid" id="P93829"/>
<dbReference type="OMA" id="DGARGDY"/>
<dbReference type="PhylomeDB" id="P93829"/>
<dbReference type="PRO" id="PR:P93829"/>
<dbReference type="Proteomes" id="UP000006548">
    <property type="component" value="Chromosome 1"/>
</dbReference>
<dbReference type="ExpressionAtlas" id="P93829">
    <property type="expression patterns" value="baseline and differential"/>
</dbReference>
<dbReference type="GO" id="GO:0005737">
    <property type="term" value="C:cytoplasm"/>
    <property type="evidence" value="ECO:0000314"/>
    <property type="project" value="TAIR"/>
</dbReference>
<dbReference type="GO" id="GO:0005783">
    <property type="term" value="C:endoplasmic reticulum"/>
    <property type="evidence" value="ECO:0000314"/>
    <property type="project" value="TAIR"/>
</dbReference>
<dbReference type="GO" id="GO:0010008">
    <property type="term" value="C:endosome membrane"/>
    <property type="evidence" value="ECO:0007669"/>
    <property type="project" value="UniProtKB-SubCell"/>
</dbReference>
<dbReference type="GO" id="GO:0046739">
    <property type="term" value="P:transport of virus in multicellular host"/>
    <property type="evidence" value="ECO:0000304"/>
    <property type="project" value="TAIR"/>
</dbReference>
<dbReference type="GO" id="GO:0016192">
    <property type="term" value="P:vesicle-mediated transport"/>
    <property type="evidence" value="ECO:0000314"/>
    <property type="project" value="TAIR"/>
</dbReference>
<dbReference type="InterPro" id="IPR004895">
    <property type="entry name" value="Prenylated_rab_accept_PRA1"/>
</dbReference>
<dbReference type="PANTHER" id="PTHR19317:SF81">
    <property type="entry name" value="PRA1 FAMILY PROTEIN D"/>
    <property type="match status" value="1"/>
</dbReference>
<dbReference type="PANTHER" id="PTHR19317">
    <property type="entry name" value="PRENYLATED RAB ACCEPTOR 1-RELATED"/>
    <property type="match status" value="1"/>
</dbReference>
<dbReference type="Pfam" id="PF03208">
    <property type="entry name" value="PRA1"/>
    <property type="match status" value="1"/>
</dbReference>
<reference key="1">
    <citation type="submission" date="1999-09" db="EMBL/GenBank/DDBJ databases">
        <title>Isolation and characterization of members of a new protein family from Arabidopsis thaliana that specifically interact with prenylated Rab proteins and SNAREs.</title>
        <authorList>
            <person name="Pay A."/>
            <person name="Nagy F."/>
            <person name="Merkle T."/>
        </authorList>
    </citation>
    <scope>NUCLEOTIDE SEQUENCE [MRNA]</scope>
    <source>
        <strain>cv. Columbia</strain>
    </source>
</reference>
<reference key="2">
    <citation type="journal article" date="2000" name="Nature">
        <title>Sequence and analysis of chromosome 1 of the plant Arabidopsis thaliana.</title>
        <authorList>
            <person name="Theologis A."/>
            <person name="Ecker J.R."/>
            <person name="Palm C.J."/>
            <person name="Federspiel N.A."/>
            <person name="Kaul S."/>
            <person name="White O."/>
            <person name="Alonso J."/>
            <person name="Altafi H."/>
            <person name="Araujo R."/>
            <person name="Bowman C.L."/>
            <person name="Brooks S.Y."/>
            <person name="Buehler E."/>
            <person name="Chan A."/>
            <person name="Chao Q."/>
            <person name="Chen H."/>
            <person name="Cheuk R.F."/>
            <person name="Chin C.W."/>
            <person name="Chung M.K."/>
            <person name="Conn L."/>
            <person name="Conway A.B."/>
            <person name="Conway A.R."/>
            <person name="Creasy T.H."/>
            <person name="Dewar K."/>
            <person name="Dunn P."/>
            <person name="Etgu P."/>
            <person name="Feldblyum T.V."/>
            <person name="Feng J.-D."/>
            <person name="Fong B."/>
            <person name="Fujii C.Y."/>
            <person name="Gill J.E."/>
            <person name="Goldsmith A.D."/>
            <person name="Haas B."/>
            <person name="Hansen N.F."/>
            <person name="Hughes B."/>
            <person name="Huizar L."/>
            <person name="Hunter J.L."/>
            <person name="Jenkins J."/>
            <person name="Johnson-Hopson C."/>
            <person name="Khan S."/>
            <person name="Khaykin E."/>
            <person name="Kim C.J."/>
            <person name="Koo H.L."/>
            <person name="Kremenetskaia I."/>
            <person name="Kurtz D.B."/>
            <person name="Kwan A."/>
            <person name="Lam B."/>
            <person name="Langin-Hooper S."/>
            <person name="Lee A."/>
            <person name="Lee J.M."/>
            <person name="Lenz C.A."/>
            <person name="Li J.H."/>
            <person name="Li Y.-P."/>
            <person name="Lin X."/>
            <person name="Liu S.X."/>
            <person name="Liu Z.A."/>
            <person name="Luros J.S."/>
            <person name="Maiti R."/>
            <person name="Marziali A."/>
            <person name="Militscher J."/>
            <person name="Miranda M."/>
            <person name="Nguyen M."/>
            <person name="Nierman W.C."/>
            <person name="Osborne B.I."/>
            <person name="Pai G."/>
            <person name="Peterson J."/>
            <person name="Pham P.K."/>
            <person name="Rizzo M."/>
            <person name="Rooney T."/>
            <person name="Rowley D."/>
            <person name="Sakano H."/>
            <person name="Salzberg S.L."/>
            <person name="Schwartz J.R."/>
            <person name="Shinn P."/>
            <person name="Southwick A.M."/>
            <person name="Sun H."/>
            <person name="Tallon L.J."/>
            <person name="Tambunga G."/>
            <person name="Toriumi M.J."/>
            <person name="Town C.D."/>
            <person name="Utterback T."/>
            <person name="Van Aken S."/>
            <person name="Vaysberg M."/>
            <person name="Vysotskaia V.S."/>
            <person name="Walker M."/>
            <person name="Wu D."/>
            <person name="Yu G."/>
            <person name="Fraser C.M."/>
            <person name="Venter J.C."/>
            <person name="Davis R.W."/>
        </authorList>
    </citation>
    <scope>NUCLEOTIDE SEQUENCE [LARGE SCALE GENOMIC DNA]</scope>
    <source>
        <strain>cv. Columbia</strain>
    </source>
</reference>
<reference key="3">
    <citation type="journal article" date="2017" name="Plant J.">
        <title>Araport11: a complete reannotation of the Arabidopsis thaliana reference genome.</title>
        <authorList>
            <person name="Cheng C.Y."/>
            <person name="Krishnakumar V."/>
            <person name="Chan A.P."/>
            <person name="Thibaud-Nissen F."/>
            <person name="Schobel S."/>
            <person name="Town C.D."/>
        </authorList>
    </citation>
    <scope>GENOME REANNOTATION</scope>
    <source>
        <strain>cv. Columbia</strain>
    </source>
</reference>
<reference key="4">
    <citation type="journal article" date="2003" name="Science">
        <title>Empirical analysis of transcriptional activity in the Arabidopsis genome.</title>
        <authorList>
            <person name="Yamada K."/>
            <person name="Lim J."/>
            <person name="Dale J.M."/>
            <person name="Chen H."/>
            <person name="Shinn P."/>
            <person name="Palm C.J."/>
            <person name="Southwick A.M."/>
            <person name="Wu H.C."/>
            <person name="Kim C.J."/>
            <person name="Nguyen M."/>
            <person name="Pham P.K."/>
            <person name="Cheuk R.F."/>
            <person name="Karlin-Newmann G."/>
            <person name="Liu S.X."/>
            <person name="Lam B."/>
            <person name="Sakano H."/>
            <person name="Wu T."/>
            <person name="Yu G."/>
            <person name="Miranda M."/>
            <person name="Quach H.L."/>
            <person name="Tripp M."/>
            <person name="Chang C.H."/>
            <person name="Lee J.M."/>
            <person name="Toriumi M.J."/>
            <person name="Chan M.M."/>
            <person name="Tang C.C."/>
            <person name="Onodera C.S."/>
            <person name="Deng J.M."/>
            <person name="Akiyama K."/>
            <person name="Ansari Y."/>
            <person name="Arakawa T."/>
            <person name="Banh J."/>
            <person name="Banno F."/>
            <person name="Bowser L."/>
            <person name="Brooks S.Y."/>
            <person name="Carninci P."/>
            <person name="Chao Q."/>
            <person name="Choy N."/>
            <person name="Enju A."/>
            <person name="Goldsmith A.D."/>
            <person name="Gurjal M."/>
            <person name="Hansen N.F."/>
            <person name="Hayashizaki Y."/>
            <person name="Johnson-Hopson C."/>
            <person name="Hsuan V.W."/>
            <person name="Iida K."/>
            <person name="Karnes M."/>
            <person name="Khan S."/>
            <person name="Koesema E."/>
            <person name="Ishida J."/>
            <person name="Jiang P.X."/>
            <person name="Jones T."/>
            <person name="Kawai J."/>
            <person name="Kamiya A."/>
            <person name="Meyers C."/>
            <person name="Nakajima M."/>
            <person name="Narusaka M."/>
            <person name="Seki M."/>
            <person name="Sakurai T."/>
            <person name="Satou M."/>
            <person name="Tamse R."/>
            <person name="Vaysberg M."/>
            <person name="Wallender E.K."/>
            <person name="Wong C."/>
            <person name="Yamamura Y."/>
            <person name="Yuan S."/>
            <person name="Shinozaki K."/>
            <person name="Davis R.W."/>
            <person name="Theologis A."/>
            <person name="Ecker J.R."/>
        </authorList>
    </citation>
    <scope>NUCLEOTIDE SEQUENCE [LARGE SCALE MRNA]</scope>
    <source>
        <strain>cv. Columbia</strain>
    </source>
</reference>
<reference key="5">
    <citation type="submission" date="2002-03" db="EMBL/GenBank/DDBJ databases">
        <title>Full-length cDNA from Arabidopsis thaliana.</title>
        <authorList>
            <person name="Brover V.V."/>
            <person name="Troukhan M.E."/>
            <person name="Alexandrov N.A."/>
            <person name="Lu Y.-P."/>
            <person name="Flavell R.B."/>
            <person name="Feldmann K.A."/>
        </authorList>
    </citation>
    <scope>NUCLEOTIDE SEQUENCE [LARGE SCALE MRNA]</scope>
</reference>
<reference key="6">
    <citation type="journal article" date="2001" name="Plant Mol. Biol.">
        <title>Identification of arabidopsis proteins that interact with the cauliflower mosaic virus (CaMV) movement protein.</title>
        <authorList>
            <person name="Huang Z."/>
            <person name="Andrianov V.M."/>
            <person name="Han Y."/>
            <person name="Howell S.H."/>
        </authorList>
    </citation>
    <scope>TISSUE SPECIFICITY</scope>
    <scope>INTERACTION WITH CAULIFLOWER MOSAIC VIRUS MOVEMENT PROTEIN</scope>
</reference>
<reference key="7">
    <citation type="journal article" date="2008" name="Plant Physiol.">
        <title>The PRA1 gene family in Arabidopsis.</title>
        <authorList>
            <person name="Alvim Kamei C.L."/>
            <person name="Boruc J."/>
            <person name="Vandepoele K."/>
            <person name="Van den Daele H."/>
            <person name="Maes S."/>
            <person name="Russinova E."/>
            <person name="Inze D."/>
            <person name="de Veylder L."/>
        </authorList>
    </citation>
    <scope>SUBCELLULAR LOCATION</scope>
    <scope>TISSUE SPECIFICITY</scope>
    <scope>INTERACTION WITH PRA1F2 AND PRA1F3</scope>
    <scope>GENE FAMILY</scope>
    <scope>NOMENCLATURE</scope>
</reference>
<reference key="8">
    <citation type="journal article" date="2012" name="Mol. Cell. Proteomics">
        <title>Comparative large-scale characterisation of plant vs. mammal proteins reveals similar and idiosyncratic N-alpha acetylation features.</title>
        <authorList>
            <person name="Bienvenut W.V."/>
            <person name="Sumpton D."/>
            <person name="Martinez A."/>
            <person name="Lilla S."/>
            <person name="Espagne C."/>
            <person name="Meinnel T."/>
            <person name="Giglione C."/>
        </authorList>
    </citation>
    <scope>ACETYLATION [LARGE SCALE ANALYSIS] AT ALA-2</scope>
    <scope>CLEAVAGE OF INITIATOR METHIONINE [LARGE SCALE ANALYSIS]</scope>
    <scope>IDENTIFICATION BY MASS SPECTROMETRY [LARGE SCALE ANALYSIS]</scope>
</reference>
<comment type="function">
    <text evidence="1">May be involved in both secretory and endocytic intracellular trafficking in the endosomal/prevacuolar compartments.</text>
</comment>
<comment type="subunit">
    <text evidence="4 5">Interacts with PRA1F2 and PRA1F3. Interacts with the cauliflower mosaic virus (CaMV) movement protein (via N-terminus).</text>
</comment>
<comment type="subcellular location">
    <subcellularLocation>
        <location evidence="5">Endosome membrane</location>
        <topology evidence="5">Multi-pass membrane protein</topology>
    </subcellularLocation>
</comment>
<comment type="tissue specificity">
    <text evidence="4 5">Expressed in hypocotyls, roots, lateral roots, lateral root caps, columella cells, leaves, shoot apex, stems and flowers.</text>
</comment>
<comment type="similarity">
    <text evidence="6">Belongs to the PRA1 family.</text>
</comment>
<protein>
    <recommendedName>
        <fullName>PRA1 family protein D</fullName>
        <shortName>AtPRA1.D</shortName>
    </recommendedName>
    <alternativeName>
        <fullName>CAMV MOVEMENT PROTEIN-INTERACTING PROTEIN 7</fullName>
    </alternativeName>
    <alternativeName>
        <fullName>Prenylated Rab acceptor 5</fullName>
    </alternativeName>
</protein>
<evidence type="ECO:0000250" key="1"/>
<evidence type="ECO:0000255" key="2"/>
<evidence type="ECO:0000256" key="3">
    <source>
        <dbReference type="SAM" id="MobiDB-lite"/>
    </source>
</evidence>
<evidence type="ECO:0000269" key="4">
    <source>
    </source>
</evidence>
<evidence type="ECO:0000269" key="5">
    <source>
    </source>
</evidence>
<evidence type="ECO:0000305" key="6"/>
<evidence type="ECO:0007744" key="7">
    <source>
    </source>
</evidence>
<keyword id="KW-0007">Acetylation</keyword>
<keyword id="KW-0967">Endosome</keyword>
<keyword id="KW-0945">Host-virus interaction</keyword>
<keyword id="KW-0472">Membrane</keyword>
<keyword id="KW-1185">Reference proteome</keyword>
<keyword id="KW-0812">Transmembrane</keyword>
<keyword id="KW-1133">Transmembrane helix</keyword>
<keyword id="KW-0813">Transport</keyword>
<name>PRA1D_ARATH</name>
<gene>
    <name type="primary">PRA1D</name>
    <name type="synonym">MPI7</name>
    <name type="synonym">MPIP7</name>
    <name type="synonym">PRA5</name>
    <name type="ordered locus">At1g04260</name>
    <name type="ORF">F19P19.30</name>
</gene>
<proteinExistence type="evidence at protein level"/>
<sequence>MANQVITGIKETAQSITGAARPWGDFLDLSAFSFPSSIADATTRVTQNLTHFRINYSIILSILLGLTLITRPIAILAFIAVGLAWFFLYFAREEPLTIFGFTIDDGIVAVLLIGLSIGSLVTTGVWLRALTTVGFGVLVLILHAALRGTDDLVSDDLESPYGPMLSTSGGGNDGARGDYSGI</sequence>
<accession>P93829</accession>
<accession>Q8LC18</accession>
<organism>
    <name type="scientific">Arabidopsis thaliana</name>
    <name type="common">Mouse-ear cress</name>
    <dbReference type="NCBI Taxonomy" id="3702"/>
    <lineage>
        <taxon>Eukaryota</taxon>
        <taxon>Viridiplantae</taxon>
        <taxon>Streptophyta</taxon>
        <taxon>Embryophyta</taxon>
        <taxon>Tracheophyta</taxon>
        <taxon>Spermatophyta</taxon>
        <taxon>Magnoliopsida</taxon>
        <taxon>eudicotyledons</taxon>
        <taxon>Gunneridae</taxon>
        <taxon>Pentapetalae</taxon>
        <taxon>rosids</taxon>
        <taxon>malvids</taxon>
        <taxon>Brassicales</taxon>
        <taxon>Brassicaceae</taxon>
        <taxon>Camelineae</taxon>
        <taxon>Arabidopsis</taxon>
    </lineage>
</organism>